<keyword id="KW-0963">Cytoplasm</keyword>
<keyword id="KW-0808">Transferase</keyword>
<keyword id="KW-0819">tRNA processing</keyword>
<reference key="1">
    <citation type="journal article" date="2009" name="BMC Genomics">
        <title>Pseudogene accumulation in the evolutionary histories of Salmonella enterica serovars Paratyphi A and Typhi.</title>
        <authorList>
            <person name="Holt K.E."/>
            <person name="Thomson N.R."/>
            <person name="Wain J."/>
            <person name="Langridge G.C."/>
            <person name="Hasan R."/>
            <person name="Bhutta Z.A."/>
            <person name="Quail M.A."/>
            <person name="Norbertczak H."/>
            <person name="Walker D."/>
            <person name="Simmonds M."/>
            <person name="White B."/>
            <person name="Bason N."/>
            <person name="Mungall K."/>
            <person name="Dougan G."/>
            <person name="Parkhill J."/>
        </authorList>
    </citation>
    <scope>NUCLEOTIDE SEQUENCE [LARGE SCALE GENOMIC DNA]</scope>
    <source>
        <strain>AKU_12601</strain>
    </source>
</reference>
<gene>
    <name evidence="1" type="primary">tusD</name>
    <name type="ordered locus">SSPA3096</name>
</gene>
<feature type="chain" id="PRO_1000122873" description="Sulfurtransferase TusD">
    <location>
        <begin position="1"/>
        <end position="128"/>
    </location>
</feature>
<feature type="active site" description="Cysteine persulfide intermediate" evidence="1">
    <location>
        <position position="78"/>
    </location>
</feature>
<proteinExistence type="inferred from homology"/>
<evidence type="ECO:0000255" key="1">
    <source>
        <dbReference type="HAMAP-Rule" id="MF_00390"/>
    </source>
</evidence>
<name>TUSD_SALPK</name>
<protein>
    <recommendedName>
        <fullName evidence="1">Sulfurtransferase TusD</fullName>
        <ecNumber evidence="1">2.8.1.-</ecNumber>
    </recommendedName>
    <alternativeName>
        <fullName evidence="1">tRNA 2-thiouridine synthesizing protein D</fullName>
    </alternativeName>
</protein>
<dbReference type="EC" id="2.8.1.-" evidence="1"/>
<dbReference type="EMBL" id="FM200053">
    <property type="protein sequence ID" value="CAR61347.1"/>
    <property type="molecule type" value="Genomic_DNA"/>
</dbReference>
<dbReference type="RefSeq" id="WP_001268010.1">
    <property type="nucleotide sequence ID" value="NC_011147.1"/>
</dbReference>
<dbReference type="SMR" id="B5BGZ7"/>
<dbReference type="KEGG" id="sek:SSPA3096"/>
<dbReference type="HOGENOM" id="CLU_132095_0_0_6"/>
<dbReference type="Proteomes" id="UP000001869">
    <property type="component" value="Chromosome"/>
</dbReference>
<dbReference type="GO" id="GO:1990228">
    <property type="term" value="C:sulfurtransferase complex"/>
    <property type="evidence" value="ECO:0007669"/>
    <property type="project" value="TreeGrafter"/>
</dbReference>
<dbReference type="GO" id="GO:0097163">
    <property type="term" value="F:sulfur carrier activity"/>
    <property type="evidence" value="ECO:0007669"/>
    <property type="project" value="TreeGrafter"/>
</dbReference>
<dbReference type="GO" id="GO:0016783">
    <property type="term" value="F:sulfurtransferase activity"/>
    <property type="evidence" value="ECO:0007669"/>
    <property type="project" value="UniProtKB-UniRule"/>
</dbReference>
<dbReference type="GO" id="GO:0002143">
    <property type="term" value="P:tRNA wobble position uridine thiolation"/>
    <property type="evidence" value="ECO:0007669"/>
    <property type="project" value="TreeGrafter"/>
</dbReference>
<dbReference type="FunFam" id="3.40.1260.10:FF:000001">
    <property type="entry name" value="Sulfurtransferase TusD"/>
    <property type="match status" value="1"/>
</dbReference>
<dbReference type="Gene3D" id="3.40.1260.10">
    <property type="entry name" value="DsrEFH-like"/>
    <property type="match status" value="1"/>
</dbReference>
<dbReference type="HAMAP" id="MF_00390">
    <property type="entry name" value="Thiourid_synth_D"/>
    <property type="match status" value="1"/>
</dbReference>
<dbReference type="InterPro" id="IPR027396">
    <property type="entry name" value="DsrEFH-like"/>
</dbReference>
<dbReference type="InterPro" id="IPR003787">
    <property type="entry name" value="Sulphur_relay_DsrE/F-like"/>
</dbReference>
<dbReference type="InterPro" id="IPR017463">
    <property type="entry name" value="Sulphur_relay_TusD/DsrE"/>
</dbReference>
<dbReference type="NCBIfam" id="NF001237">
    <property type="entry name" value="PRK00207.1"/>
    <property type="match status" value="1"/>
</dbReference>
<dbReference type="NCBIfam" id="TIGR03012">
    <property type="entry name" value="sulf_tusD_dsrE"/>
    <property type="match status" value="1"/>
</dbReference>
<dbReference type="PANTHER" id="PTHR34874">
    <property type="entry name" value="PROTEIN YCHN"/>
    <property type="match status" value="1"/>
</dbReference>
<dbReference type="PANTHER" id="PTHR34874:SF3">
    <property type="entry name" value="SULFURTRANSFERASE TUSD"/>
    <property type="match status" value="1"/>
</dbReference>
<dbReference type="Pfam" id="PF02635">
    <property type="entry name" value="DsrE"/>
    <property type="match status" value="1"/>
</dbReference>
<dbReference type="SUPFAM" id="SSF75169">
    <property type="entry name" value="DsrEFH-like"/>
    <property type="match status" value="1"/>
</dbReference>
<accession>B5BGZ7</accession>
<comment type="function">
    <text evidence="1">Part of a sulfur-relay system required for 2-thiolation of 5-methylaminomethyl-2-thiouridine (mnm(5)s(2)U) at tRNA wobble positions. Accepts sulfur from TusA and transfers it in turn to TusE.</text>
</comment>
<comment type="subunit">
    <text evidence="1">Heterohexamer, formed by a dimer of trimers. The hexameric TusBCD complex contains 2 copies each of TusB, TusC and TusD. The TusBCD complex interacts with TusE.</text>
</comment>
<comment type="subcellular location">
    <subcellularLocation>
        <location evidence="1">Cytoplasm</location>
    </subcellularLocation>
</comment>
<comment type="similarity">
    <text evidence="1">Belongs to the DsrE/TusD family.</text>
</comment>
<sequence length="128" mass="13758">MRYAIMVTGPAYGTQQASSALQFAHALLNEGHELASVFFYREGVYNANLLTSPASDEYDLVRAWQKLNTQHGVALNICVAAALRRGIIDETEAGRLALPSANLQPGFTLSGLGALAEASLTCDRVVQF</sequence>
<organism>
    <name type="scientific">Salmonella paratyphi A (strain AKU_12601)</name>
    <dbReference type="NCBI Taxonomy" id="554290"/>
    <lineage>
        <taxon>Bacteria</taxon>
        <taxon>Pseudomonadati</taxon>
        <taxon>Pseudomonadota</taxon>
        <taxon>Gammaproteobacteria</taxon>
        <taxon>Enterobacterales</taxon>
        <taxon>Enterobacteriaceae</taxon>
        <taxon>Salmonella</taxon>
    </lineage>
</organism>